<accession>A5GX22</accession>
<keyword id="KW-0067">ATP-binding</keyword>
<keyword id="KW-0436">Ligase</keyword>
<keyword id="KW-0460">Magnesium</keyword>
<keyword id="KW-0479">Metal-binding</keyword>
<keyword id="KW-0547">Nucleotide-binding</keyword>
<keyword id="KW-0658">Purine biosynthesis</keyword>
<keyword id="KW-1185">Reference proteome</keyword>
<name>PURT_SYNR3</name>
<sequence>MTSTHLPATLLLLGSGELGKEVAIAAQRLGCRVVAVDRYANAPAMQVADTAVVIPMTDAEALKQVIREHQPALVIPEIEALAVDALAELEAEGITVIPTARATAITMNRDRIRDLAAGELGLRTARFGYASSAEELSSAAEPLGWPVVVKPVMSSSGKGQSVATNPEELQQAWTAATQGARGSASLVIVEEFLRFEQEITLLTVRQKDGPTLFCPPIGHIQERGDYQCSWQPAELQQSQLLEAQRMARQVTDALGGAGIFGVEFFIASGEVIFSELSPRPHDTGLVTLRGQNLSEFELHLRAVLGLPIPSITSTGAAASRVVLAGADQQGGPVHYRGVAEALAVPESELLLFGKPEARPMRRMGVALASGSSLAEARGRADTAAQAVALEIGG</sequence>
<reference key="1">
    <citation type="submission" date="2006-05" db="EMBL/GenBank/DDBJ databases">
        <authorList>
            <consortium name="Genoscope"/>
        </authorList>
    </citation>
    <scope>NUCLEOTIDE SEQUENCE [LARGE SCALE GENOMIC DNA]</scope>
    <source>
        <strain>RCC307</strain>
    </source>
</reference>
<evidence type="ECO:0000255" key="1">
    <source>
        <dbReference type="HAMAP-Rule" id="MF_01643"/>
    </source>
</evidence>
<gene>
    <name evidence="1" type="primary">purT</name>
    <name type="ordered locus">SynRCC307_2528</name>
</gene>
<organism>
    <name type="scientific">Synechococcus sp. (strain RCC307)</name>
    <dbReference type="NCBI Taxonomy" id="316278"/>
    <lineage>
        <taxon>Bacteria</taxon>
        <taxon>Bacillati</taxon>
        <taxon>Cyanobacteriota</taxon>
        <taxon>Cyanophyceae</taxon>
        <taxon>Synechococcales</taxon>
        <taxon>Synechococcaceae</taxon>
        <taxon>Synechococcus</taxon>
    </lineage>
</organism>
<comment type="function">
    <text evidence="1">Involved in the de novo purine biosynthesis. Catalyzes the transfer of formate to 5-phospho-ribosyl-glycinamide (GAR), producing 5-phospho-ribosyl-N-formylglycinamide (FGAR). Formate is provided by PurU via hydrolysis of 10-formyl-tetrahydrofolate.</text>
</comment>
<comment type="catalytic activity">
    <reaction evidence="1">
        <text>N(1)-(5-phospho-beta-D-ribosyl)glycinamide + formate + ATP = N(2)-formyl-N(1)-(5-phospho-beta-D-ribosyl)glycinamide + ADP + phosphate + H(+)</text>
        <dbReference type="Rhea" id="RHEA:24829"/>
        <dbReference type="ChEBI" id="CHEBI:15378"/>
        <dbReference type="ChEBI" id="CHEBI:15740"/>
        <dbReference type="ChEBI" id="CHEBI:30616"/>
        <dbReference type="ChEBI" id="CHEBI:43474"/>
        <dbReference type="ChEBI" id="CHEBI:143788"/>
        <dbReference type="ChEBI" id="CHEBI:147286"/>
        <dbReference type="ChEBI" id="CHEBI:456216"/>
        <dbReference type="EC" id="6.3.1.21"/>
    </reaction>
    <physiologicalReaction direction="left-to-right" evidence="1">
        <dbReference type="Rhea" id="RHEA:24830"/>
    </physiologicalReaction>
</comment>
<comment type="pathway">
    <text evidence="1">Purine metabolism; IMP biosynthesis via de novo pathway; N(2)-formyl-N(1)-(5-phospho-D-ribosyl)glycinamide from N(1)-(5-phospho-D-ribosyl)glycinamide (formate route): step 1/1.</text>
</comment>
<comment type="subunit">
    <text evidence="1">Homodimer.</text>
</comment>
<comment type="similarity">
    <text evidence="1">Belongs to the PurK/PurT family.</text>
</comment>
<feature type="chain" id="PRO_0000319250" description="Formate-dependent phosphoribosylglycinamide formyltransferase">
    <location>
        <begin position="1"/>
        <end position="393"/>
    </location>
</feature>
<feature type="domain" description="ATP-grasp" evidence="1">
    <location>
        <begin position="114"/>
        <end position="304"/>
    </location>
</feature>
<feature type="binding site" evidence="1">
    <location>
        <begin position="17"/>
        <end position="18"/>
    </location>
    <ligand>
        <name>N(1)-(5-phospho-beta-D-ribosyl)glycinamide</name>
        <dbReference type="ChEBI" id="CHEBI:143788"/>
    </ligand>
</feature>
<feature type="binding site" evidence="1">
    <location>
        <position position="77"/>
    </location>
    <ligand>
        <name>N(1)-(5-phospho-beta-D-ribosyl)glycinamide</name>
        <dbReference type="ChEBI" id="CHEBI:143788"/>
    </ligand>
</feature>
<feature type="binding site" evidence="1">
    <location>
        <position position="109"/>
    </location>
    <ligand>
        <name>ATP</name>
        <dbReference type="ChEBI" id="CHEBI:30616"/>
    </ligand>
</feature>
<feature type="binding site" evidence="1">
    <location>
        <position position="150"/>
    </location>
    <ligand>
        <name>ATP</name>
        <dbReference type="ChEBI" id="CHEBI:30616"/>
    </ligand>
</feature>
<feature type="binding site" evidence="1">
    <location>
        <begin position="155"/>
        <end position="160"/>
    </location>
    <ligand>
        <name>ATP</name>
        <dbReference type="ChEBI" id="CHEBI:30616"/>
    </ligand>
</feature>
<feature type="binding site" evidence="1">
    <location>
        <begin position="190"/>
        <end position="193"/>
    </location>
    <ligand>
        <name>ATP</name>
        <dbReference type="ChEBI" id="CHEBI:30616"/>
    </ligand>
</feature>
<feature type="binding site" evidence="1">
    <location>
        <position position="198"/>
    </location>
    <ligand>
        <name>ATP</name>
        <dbReference type="ChEBI" id="CHEBI:30616"/>
    </ligand>
</feature>
<feature type="binding site" evidence="1">
    <location>
        <position position="263"/>
    </location>
    <ligand>
        <name>Mg(2+)</name>
        <dbReference type="ChEBI" id="CHEBI:18420"/>
    </ligand>
</feature>
<feature type="binding site" evidence="1">
    <location>
        <position position="275"/>
    </location>
    <ligand>
        <name>Mg(2+)</name>
        <dbReference type="ChEBI" id="CHEBI:18420"/>
    </ligand>
</feature>
<feature type="binding site" evidence="1">
    <location>
        <position position="282"/>
    </location>
    <ligand>
        <name>N(1)-(5-phospho-beta-D-ribosyl)glycinamide</name>
        <dbReference type="ChEBI" id="CHEBI:143788"/>
    </ligand>
</feature>
<feature type="binding site" evidence="1">
    <location>
        <position position="354"/>
    </location>
    <ligand>
        <name>N(1)-(5-phospho-beta-D-ribosyl)glycinamide</name>
        <dbReference type="ChEBI" id="CHEBI:143788"/>
    </ligand>
</feature>
<feature type="binding site" evidence="1">
    <location>
        <begin position="361"/>
        <end position="362"/>
    </location>
    <ligand>
        <name>N(1)-(5-phospho-beta-D-ribosyl)glycinamide</name>
        <dbReference type="ChEBI" id="CHEBI:143788"/>
    </ligand>
</feature>
<protein>
    <recommendedName>
        <fullName evidence="1">Formate-dependent phosphoribosylglycinamide formyltransferase</fullName>
        <ecNumber evidence="1">6.3.1.21</ecNumber>
    </recommendedName>
    <alternativeName>
        <fullName evidence="1">5'-phosphoribosylglycinamide transformylase 2</fullName>
    </alternativeName>
    <alternativeName>
        <fullName evidence="1">Formate-dependent GAR transformylase</fullName>
    </alternativeName>
    <alternativeName>
        <fullName evidence="1">GAR transformylase 2</fullName>
        <shortName evidence="1">GART 2</shortName>
    </alternativeName>
    <alternativeName>
        <fullName evidence="1">Non-folate glycinamide ribonucleotide transformylase</fullName>
    </alternativeName>
    <alternativeName>
        <fullName evidence="1">Phosphoribosylglycinamide formyltransferase 2</fullName>
    </alternativeName>
</protein>
<proteinExistence type="inferred from homology"/>
<dbReference type="EC" id="6.3.1.21" evidence="1"/>
<dbReference type="EMBL" id="CT978603">
    <property type="protein sequence ID" value="CAK29431.1"/>
    <property type="molecule type" value="Genomic_DNA"/>
</dbReference>
<dbReference type="SMR" id="A5GX22"/>
<dbReference type="STRING" id="316278.SynRCC307_2528"/>
<dbReference type="KEGG" id="syr:SynRCC307_2528"/>
<dbReference type="eggNOG" id="COG0027">
    <property type="taxonomic scope" value="Bacteria"/>
</dbReference>
<dbReference type="HOGENOM" id="CLU_011534_1_3_3"/>
<dbReference type="OrthoDB" id="9804625at2"/>
<dbReference type="UniPathway" id="UPA00074">
    <property type="reaction ID" value="UER00127"/>
</dbReference>
<dbReference type="Proteomes" id="UP000001115">
    <property type="component" value="Chromosome"/>
</dbReference>
<dbReference type="GO" id="GO:0005829">
    <property type="term" value="C:cytosol"/>
    <property type="evidence" value="ECO:0007669"/>
    <property type="project" value="TreeGrafter"/>
</dbReference>
<dbReference type="GO" id="GO:0005524">
    <property type="term" value="F:ATP binding"/>
    <property type="evidence" value="ECO:0007669"/>
    <property type="project" value="UniProtKB-UniRule"/>
</dbReference>
<dbReference type="GO" id="GO:0000287">
    <property type="term" value="F:magnesium ion binding"/>
    <property type="evidence" value="ECO:0007669"/>
    <property type="project" value="InterPro"/>
</dbReference>
<dbReference type="GO" id="GO:0043815">
    <property type="term" value="F:phosphoribosylglycinamide formyltransferase 2 activity"/>
    <property type="evidence" value="ECO:0007669"/>
    <property type="project" value="UniProtKB-UniRule"/>
</dbReference>
<dbReference type="GO" id="GO:0004644">
    <property type="term" value="F:phosphoribosylglycinamide formyltransferase activity"/>
    <property type="evidence" value="ECO:0007669"/>
    <property type="project" value="InterPro"/>
</dbReference>
<dbReference type="GO" id="GO:0006189">
    <property type="term" value="P:'de novo' IMP biosynthetic process"/>
    <property type="evidence" value="ECO:0007669"/>
    <property type="project" value="UniProtKB-UniRule"/>
</dbReference>
<dbReference type="Gene3D" id="3.40.50.20">
    <property type="match status" value="1"/>
</dbReference>
<dbReference type="Gene3D" id="3.30.1490.20">
    <property type="entry name" value="ATP-grasp fold, A domain"/>
    <property type="match status" value="1"/>
</dbReference>
<dbReference type="Gene3D" id="3.30.470.20">
    <property type="entry name" value="ATP-grasp fold, B domain"/>
    <property type="match status" value="1"/>
</dbReference>
<dbReference type="HAMAP" id="MF_01643">
    <property type="entry name" value="PurT"/>
    <property type="match status" value="1"/>
</dbReference>
<dbReference type="InterPro" id="IPR011761">
    <property type="entry name" value="ATP-grasp"/>
</dbReference>
<dbReference type="InterPro" id="IPR003135">
    <property type="entry name" value="ATP-grasp_carboxylate-amine"/>
</dbReference>
<dbReference type="InterPro" id="IPR013815">
    <property type="entry name" value="ATP_grasp_subdomain_1"/>
</dbReference>
<dbReference type="InterPro" id="IPR016185">
    <property type="entry name" value="PreATP-grasp_dom_sf"/>
</dbReference>
<dbReference type="InterPro" id="IPR005862">
    <property type="entry name" value="PurT"/>
</dbReference>
<dbReference type="InterPro" id="IPR054350">
    <property type="entry name" value="PurT/PurK_preATP-grasp"/>
</dbReference>
<dbReference type="InterPro" id="IPR048740">
    <property type="entry name" value="PurT_C"/>
</dbReference>
<dbReference type="InterPro" id="IPR011054">
    <property type="entry name" value="Rudment_hybrid_motif"/>
</dbReference>
<dbReference type="NCBIfam" id="NF006766">
    <property type="entry name" value="PRK09288.1"/>
    <property type="match status" value="1"/>
</dbReference>
<dbReference type="NCBIfam" id="TIGR01142">
    <property type="entry name" value="purT"/>
    <property type="match status" value="1"/>
</dbReference>
<dbReference type="PANTHER" id="PTHR43055">
    <property type="entry name" value="FORMATE-DEPENDENT PHOSPHORIBOSYLGLYCINAMIDE FORMYLTRANSFERASE"/>
    <property type="match status" value="1"/>
</dbReference>
<dbReference type="PANTHER" id="PTHR43055:SF1">
    <property type="entry name" value="FORMATE-DEPENDENT PHOSPHORIBOSYLGLYCINAMIDE FORMYLTRANSFERASE"/>
    <property type="match status" value="1"/>
</dbReference>
<dbReference type="Pfam" id="PF02222">
    <property type="entry name" value="ATP-grasp"/>
    <property type="match status" value="1"/>
</dbReference>
<dbReference type="Pfam" id="PF21244">
    <property type="entry name" value="PurT_C"/>
    <property type="match status" value="1"/>
</dbReference>
<dbReference type="Pfam" id="PF22660">
    <property type="entry name" value="RS_preATP-grasp-like"/>
    <property type="match status" value="1"/>
</dbReference>
<dbReference type="SUPFAM" id="SSF56059">
    <property type="entry name" value="Glutathione synthetase ATP-binding domain-like"/>
    <property type="match status" value="1"/>
</dbReference>
<dbReference type="SUPFAM" id="SSF52440">
    <property type="entry name" value="PreATP-grasp domain"/>
    <property type="match status" value="1"/>
</dbReference>
<dbReference type="SUPFAM" id="SSF51246">
    <property type="entry name" value="Rudiment single hybrid motif"/>
    <property type="match status" value="1"/>
</dbReference>
<dbReference type="PROSITE" id="PS50975">
    <property type="entry name" value="ATP_GRASP"/>
    <property type="match status" value="1"/>
</dbReference>